<protein>
    <recommendedName>
        <fullName evidence="1">Crotonobetainyl-CoA reductase</fullName>
        <ecNumber evidence="1">1.3.8.13</ecNumber>
    </recommendedName>
    <alternativeName>
        <fullName evidence="1">Crotonobetainyl-CoA dehydrogenase</fullName>
    </alternativeName>
</protein>
<dbReference type="EC" id="1.3.8.13" evidence="1"/>
<dbReference type="EMBL" id="CU928158">
    <property type="protein sequence ID" value="CAQ87633.1"/>
    <property type="molecule type" value="Genomic_DNA"/>
</dbReference>
<dbReference type="RefSeq" id="WP_000347117.1">
    <property type="nucleotide sequence ID" value="NC_011740.1"/>
</dbReference>
<dbReference type="SMR" id="B7LWN0"/>
<dbReference type="GeneID" id="93777396"/>
<dbReference type="KEGG" id="efe:EFER_0047"/>
<dbReference type="HOGENOM" id="CLU_018204_0_2_6"/>
<dbReference type="OrthoDB" id="9769473at2"/>
<dbReference type="UniPathway" id="UPA00117"/>
<dbReference type="Proteomes" id="UP000000745">
    <property type="component" value="Chromosome"/>
</dbReference>
<dbReference type="GO" id="GO:0005737">
    <property type="term" value="C:cytoplasm"/>
    <property type="evidence" value="ECO:0007669"/>
    <property type="project" value="UniProtKB-SubCell"/>
</dbReference>
<dbReference type="GO" id="GO:0003995">
    <property type="term" value="F:acyl-CoA dehydrogenase activity"/>
    <property type="evidence" value="ECO:0007669"/>
    <property type="project" value="InterPro"/>
</dbReference>
<dbReference type="GO" id="GO:0050660">
    <property type="term" value="F:flavin adenine dinucleotide binding"/>
    <property type="evidence" value="ECO:0007669"/>
    <property type="project" value="InterPro"/>
</dbReference>
<dbReference type="GO" id="GO:0009437">
    <property type="term" value="P:carnitine metabolic process"/>
    <property type="evidence" value="ECO:0007669"/>
    <property type="project" value="UniProtKB-UniRule"/>
</dbReference>
<dbReference type="CDD" id="cd00567">
    <property type="entry name" value="ACAD"/>
    <property type="match status" value="1"/>
</dbReference>
<dbReference type="FunFam" id="1.20.140.10:FF:000001">
    <property type="entry name" value="Acyl-CoA dehydrogenase"/>
    <property type="match status" value="1"/>
</dbReference>
<dbReference type="FunFam" id="2.40.110.10:FF:000002">
    <property type="entry name" value="Acyl-CoA dehydrogenase fadE12"/>
    <property type="match status" value="1"/>
</dbReference>
<dbReference type="FunFam" id="1.10.540.10:FF:000005">
    <property type="entry name" value="Crotonobetainyl-CoA reductase"/>
    <property type="match status" value="1"/>
</dbReference>
<dbReference type="Gene3D" id="1.10.540.10">
    <property type="entry name" value="Acyl-CoA dehydrogenase/oxidase, N-terminal domain"/>
    <property type="match status" value="1"/>
</dbReference>
<dbReference type="Gene3D" id="2.40.110.10">
    <property type="entry name" value="Butyryl-CoA Dehydrogenase, subunit A, domain 2"/>
    <property type="match status" value="1"/>
</dbReference>
<dbReference type="Gene3D" id="1.20.140.10">
    <property type="entry name" value="Butyryl-CoA Dehydrogenase, subunit A, domain 3"/>
    <property type="match status" value="1"/>
</dbReference>
<dbReference type="HAMAP" id="MF_01052">
    <property type="entry name" value="CaiA"/>
    <property type="match status" value="1"/>
</dbReference>
<dbReference type="InterPro" id="IPR006089">
    <property type="entry name" value="Acyl-CoA_DH_CS"/>
</dbReference>
<dbReference type="InterPro" id="IPR006091">
    <property type="entry name" value="Acyl-CoA_Oxase/DH_mid-dom"/>
</dbReference>
<dbReference type="InterPro" id="IPR046373">
    <property type="entry name" value="Acyl-CoA_Oxase/DH_mid-dom_sf"/>
</dbReference>
<dbReference type="InterPro" id="IPR036250">
    <property type="entry name" value="AcylCo_DH-like_C"/>
</dbReference>
<dbReference type="InterPro" id="IPR009075">
    <property type="entry name" value="AcylCo_DH/oxidase_C"/>
</dbReference>
<dbReference type="InterPro" id="IPR013786">
    <property type="entry name" value="AcylCoA_DH/ox_N"/>
</dbReference>
<dbReference type="InterPro" id="IPR037069">
    <property type="entry name" value="AcylCoA_DH/ox_N_sf"/>
</dbReference>
<dbReference type="InterPro" id="IPR009100">
    <property type="entry name" value="AcylCoA_DH/oxidase_NM_dom_sf"/>
</dbReference>
<dbReference type="InterPro" id="IPR023450">
    <property type="entry name" value="CaiA"/>
</dbReference>
<dbReference type="NCBIfam" id="NF002885">
    <property type="entry name" value="PRK03354.1"/>
    <property type="match status" value="1"/>
</dbReference>
<dbReference type="PANTHER" id="PTHR43884">
    <property type="entry name" value="ACYL-COA DEHYDROGENASE"/>
    <property type="match status" value="1"/>
</dbReference>
<dbReference type="PANTHER" id="PTHR43884:SF12">
    <property type="entry name" value="ISOVALERYL-COA DEHYDROGENASE, MITOCHONDRIAL-RELATED"/>
    <property type="match status" value="1"/>
</dbReference>
<dbReference type="Pfam" id="PF00441">
    <property type="entry name" value="Acyl-CoA_dh_1"/>
    <property type="match status" value="1"/>
</dbReference>
<dbReference type="Pfam" id="PF02770">
    <property type="entry name" value="Acyl-CoA_dh_M"/>
    <property type="match status" value="1"/>
</dbReference>
<dbReference type="Pfam" id="PF02771">
    <property type="entry name" value="Acyl-CoA_dh_N"/>
    <property type="match status" value="1"/>
</dbReference>
<dbReference type="PIRSF" id="PIRSF016578">
    <property type="entry name" value="HsaA"/>
    <property type="match status" value="1"/>
</dbReference>
<dbReference type="SUPFAM" id="SSF47203">
    <property type="entry name" value="Acyl-CoA dehydrogenase C-terminal domain-like"/>
    <property type="match status" value="1"/>
</dbReference>
<dbReference type="SUPFAM" id="SSF56645">
    <property type="entry name" value="Acyl-CoA dehydrogenase NM domain-like"/>
    <property type="match status" value="1"/>
</dbReference>
<dbReference type="PROSITE" id="PS00072">
    <property type="entry name" value="ACYL_COA_DH_1"/>
    <property type="match status" value="1"/>
</dbReference>
<dbReference type="PROSITE" id="PS00073">
    <property type="entry name" value="ACYL_COA_DH_2"/>
    <property type="match status" value="1"/>
</dbReference>
<sequence length="380" mass="42558">MDFNLNDEQELFVAGIRELMASENWEAYFAECDRDSVYPERFVKALADMGIDSLLIPEEHGGLDAGFVTLAAVWMELGRLGAPTYVLYQLPGGFNTFLREGTQEQIDKIMAFRGTGKQMWNSAITEPGAGSDVGSLKTTYTRRNGKIYLNGSKCFITSSAYTPYIVVMARDGASPDKPVYTEWFVDMSKPGIKVTKLEKLGLRMDSCCEITFDDVELDEKDMFGREGNGFNRVKEEFDHERFLVALTNYGTAMCAFEDAARYANQRVQFGEAIGRFQLIQEKFAHMAIKLNSMKNMLYEAAWKADNGTITSGDAAMCKYFCANAAFEVVDSAMQVLGGVGIAGNHRISRFWRDLRVDRVSGGSDEMQILTLGRAVLKQYR</sequence>
<comment type="function">
    <text evidence="1">Catalyzes the reduction of crotonobetainyl-CoA to gamma-butyrobetainyl-CoA.</text>
</comment>
<comment type="catalytic activity">
    <reaction evidence="1">
        <text>4-(trimethylamino)butanoyl-CoA + oxidized [electron-transfer flavoprotein] + H(+) = crotonobetainyl-CoA + reduced [electron-transfer flavoprotein]</text>
        <dbReference type="Rhea" id="RHEA:51584"/>
        <dbReference type="Rhea" id="RHEA-COMP:10685"/>
        <dbReference type="Rhea" id="RHEA-COMP:10686"/>
        <dbReference type="ChEBI" id="CHEBI:15378"/>
        <dbReference type="ChEBI" id="CHEBI:57692"/>
        <dbReference type="ChEBI" id="CHEBI:58307"/>
        <dbReference type="ChEBI" id="CHEBI:60933"/>
        <dbReference type="ChEBI" id="CHEBI:61513"/>
        <dbReference type="EC" id="1.3.8.13"/>
    </reaction>
</comment>
<comment type="cofactor">
    <cofactor evidence="1">
        <name>FAD</name>
        <dbReference type="ChEBI" id="CHEBI:57692"/>
    </cofactor>
</comment>
<comment type="pathway">
    <text evidence="1">Amine and polyamine metabolism; carnitine metabolism.</text>
</comment>
<comment type="subunit">
    <text evidence="1">Homotetramer.</text>
</comment>
<comment type="subcellular location">
    <subcellularLocation>
        <location evidence="1">Cytoplasm</location>
    </subcellularLocation>
</comment>
<comment type="similarity">
    <text evidence="1">Belongs to the acyl-CoA dehydrogenase family.</text>
</comment>
<name>CAIA_ESCF3</name>
<keyword id="KW-0963">Cytoplasm</keyword>
<keyword id="KW-0274">FAD</keyword>
<keyword id="KW-0285">Flavoprotein</keyword>
<keyword id="KW-0560">Oxidoreductase</keyword>
<gene>
    <name evidence="1" type="primary">caiA</name>
    <name type="ordered locus">EFER_0047</name>
</gene>
<feature type="chain" id="PRO_1000136276" description="Crotonobetainyl-CoA reductase">
    <location>
        <begin position="1"/>
        <end position="380"/>
    </location>
</feature>
<organism>
    <name type="scientific">Escherichia fergusonii (strain ATCC 35469 / DSM 13698 / CCUG 18766 / IAM 14443 / JCM 21226 / LMG 7866 / NBRC 102419 / NCTC 12128 / CDC 0568-73)</name>
    <dbReference type="NCBI Taxonomy" id="585054"/>
    <lineage>
        <taxon>Bacteria</taxon>
        <taxon>Pseudomonadati</taxon>
        <taxon>Pseudomonadota</taxon>
        <taxon>Gammaproteobacteria</taxon>
        <taxon>Enterobacterales</taxon>
        <taxon>Enterobacteriaceae</taxon>
        <taxon>Escherichia</taxon>
    </lineage>
</organism>
<accession>B7LWN0</accession>
<reference key="1">
    <citation type="journal article" date="2009" name="PLoS Genet.">
        <title>Organised genome dynamics in the Escherichia coli species results in highly diverse adaptive paths.</title>
        <authorList>
            <person name="Touchon M."/>
            <person name="Hoede C."/>
            <person name="Tenaillon O."/>
            <person name="Barbe V."/>
            <person name="Baeriswyl S."/>
            <person name="Bidet P."/>
            <person name="Bingen E."/>
            <person name="Bonacorsi S."/>
            <person name="Bouchier C."/>
            <person name="Bouvet O."/>
            <person name="Calteau A."/>
            <person name="Chiapello H."/>
            <person name="Clermont O."/>
            <person name="Cruveiller S."/>
            <person name="Danchin A."/>
            <person name="Diard M."/>
            <person name="Dossat C."/>
            <person name="Karoui M.E."/>
            <person name="Frapy E."/>
            <person name="Garry L."/>
            <person name="Ghigo J.M."/>
            <person name="Gilles A.M."/>
            <person name="Johnson J."/>
            <person name="Le Bouguenec C."/>
            <person name="Lescat M."/>
            <person name="Mangenot S."/>
            <person name="Martinez-Jehanne V."/>
            <person name="Matic I."/>
            <person name="Nassif X."/>
            <person name="Oztas S."/>
            <person name="Petit M.A."/>
            <person name="Pichon C."/>
            <person name="Rouy Z."/>
            <person name="Ruf C.S."/>
            <person name="Schneider D."/>
            <person name="Tourret J."/>
            <person name="Vacherie B."/>
            <person name="Vallenet D."/>
            <person name="Medigue C."/>
            <person name="Rocha E.P.C."/>
            <person name="Denamur E."/>
        </authorList>
    </citation>
    <scope>NUCLEOTIDE SEQUENCE [LARGE SCALE GENOMIC DNA]</scope>
    <source>
        <strain>ATCC 35469 / DSM 13698 / BCRC 15582 / CCUG 18766 / IAM 14443 / JCM 21226 / LMG 7866 / NBRC 102419 / NCTC 12128 / CDC 0568-73</strain>
    </source>
</reference>
<proteinExistence type="inferred from homology"/>
<evidence type="ECO:0000255" key="1">
    <source>
        <dbReference type="HAMAP-Rule" id="MF_01052"/>
    </source>
</evidence>